<feature type="chain" id="PRO_0000427782" description="Cyclic pyranopterin monophosphate synthase 1">
    <location>
        <begin position="1"/>
        <end position="170"/>
    </location>
</feature>
<feature type="active site" evidence="1">
    <location>
        <position position="131"/>
    </location>
</feature>
<feature type="binding site" evidence="1">
    <location>
        <begin position="79"/>
        <end position="81"/>
    </location>
    <ligand>
        <name>substrate</name>
    </ligand>
</feature>
<feature type="binding site" evidence="1">
    <location>
        <begin position="116"/>
        <end position="117"/>
    </location>
    <ligand>
        <name>substrate</name>
    </ligand>
</feature>
<name>MOAC1_MYCTO</name>
<comment type="function">
    <text evidence="1">Catalyzes the conversion of (8S)-3',8-cyclo-7,8-dihydroguanosine 5'-triphosphate to cyclic pyranopterin monophosphate (cPMP).</text>
</comment>
<comment type="catalytic activity">
    <reaction evidence="1">
        <text>(8S)-3',8-cyclo-7,8-dihydroguanosine 5'-triphosphate = cyclic pyranopterin phosphate + diphosphate</text>
        <dbReference type="Rhea" id="RHEA:49580"/>
        <dbReference type="ChEBI" id="CHEBI:33019"/>
        <dbReference type="ChEBI" id="CHEBI:59648"/>
        <dbReference type="ChEBI" id="CHEBI:131766"/>
        <dbReference type="EC" id="4.6.1.17"/>
    </reaction>
</comment>
<comment type="pathway">
    <text evidence="1">Cofactor biosynthesis; molybdopterin biosynthesis.</text>
</comment>
<comment type="subunit">
    <text evidence="1">Homohexamer; trimer of dimers.</text>
</comment>
<comment type="similarity">
    <text evidence="1">Belongs to the MoaC family.</text>
</comment>
<protein>
    <recommendedName>
        <fullName evidence="1">Cyclic pyranopterin monophosphate synthase 1</fullName>
        <ecNumber evidence="1">4.6.1.17</ecNumber>
    </recommendedName>
    <alternativeName>
        <fullName evidence="1">Molybdenum cofactor biosynthesis protein C 1</fullName>
    </alternativeName>
</protein>
<reference key="1">
    <citation type="journal article" date="2002" name="J. Bacteriol.">
        <title>Whole-genome comparison of Mycobacterium tuberculosis clinical and laboratory strains.</title>
        <authorList>
            <person name="Fleischmann R.D."/>
            <person name="Alland D."/>
            <person name="Eisen J.A."/>
            <person name="Carpenter L."/>
            <person name="White O."/>
            <person name="Peterson J.D."/>
            <person name="DeBoy R.T."/>
            <person name="Dodson R.J."/>
            <person name="Gwinn M.L."/>
            <person name="Haft D.H."/>
            <person name="Hickey E.K."/>
            <person name="Kolonay J.F."/>
            <person name="Nelson W.C."/>
            <person name="Umayam L.A."/>
            <person name="Ermolaeva M.D."/>
            <person name="Salzberg S.L."/>
            <person name="Delcher A."/>
            <person name="Utterback T.R."/>
            <person name="Weidman J.F."/>
            <person name="Khouri H.M."/>
            <person name="Gill J."/>
            <person name="Mikula A."/>
            <person name="Bishai W."/>
            <person name="Jacobs W.R. Jr."/>
            <person name="Venter J.C."/>
            <person name="Fraser C.M."/>
        </authorList>
    </citation>
    <scope>NUCLEOTIDE SEQUENCE [LARGE SCALE GENOMIC DNA]</scope>
    <source>
        <strain>CDC 1551 / Oshkosh</strain>
    </source>
</reference>
<proteinExistence type="inferred from homology"/>
<dbReference type="EC" id="4.6.1.17" evidence="1"/>
<dbReference type="EMBL" id="AE000516">
    <property type="protein sequence ID" value="AAK47533.1"/>
    <property type="molecule type" value="Genomic_DNA"/>
</dbReference>
<dbReference type="PIR" id="F70920">
    <property type="entry name" value="F70920"/>
</dbReference>
<dbReference type="RefSeq" id="WP_003899917.1">
    <property type="nucleotide sequence ID" value="NZ_KK341227.1"/>
</dbReference>
<dbReference type="SMR" id="P9WJR8"/>
<dbReference type="KEGG" id="mtc:MT3194"/>
<dbReference type="PATRIC" id="fig|83331.31.peg.3444"/>
<dbReference type="HOGENOM" id="CLU_074693_1_1_11"/>
<dbReference type="UniPathway" id="UPA00344"/>
<dbReference type="Proteomes" id="UP000001020">
    <property type="component" value="Chromosome"/>
</dbReference>
<dbReference type="GO" id="GO:0061799">
    <property type="term" value="F:cyclic pyranopterin monophosphate synthase activity"/>
    <property type="evidence" value="ECO:0007669"/>
    <property type="project" value="UniProtKB-UniRule"/>
</dbReference>
<dbReference type="GO" id="GO:0006777">
    <property type="term" value="P:Mo-molybdopterin cofactor biosynthetic process"/>
    <property type="evidence" value="ECO:0007669"/>
    <property type="project" value="UniProtKB-UniRule"/>
</dbReference>
<dbReference type="CDD" id="cd01420">
    <property type="entry name" value="MoaC_PE"/>
    <property type="match status" value="1"/>
</dbReference>
<dbReference type="FunFam" id="3.30.70.640:FF:000001">
    <property type="entry name" value="Cyclic pyranopterin monophosphate synthase"/>
    <property type="match status" value="1"/>
</dbReference>
<dbReference type="Gene3D" id="3.30.70.640">
    <property type="entry name" value="Molybdopterin cofactor biosynthesis C (MoaC) domain"/>
    <property type="match status" value="1"/>
</dbReference>
<dbReference type="HAMAP" id="MF_01224_B">
    <property type="entry name" value="MoaC_B"/>
    <property type="match status" value="1"/>
</dbReference>
<dbReference type="InterPro" id="IPR023045">
    <property type="entry name" value="MoaC"/>
</dbReference>
<dbReference type="InterPro" id="IPR047594">
    <property type="entry name" value="MoaC_bact/euk"/>
</dbReference>
<dbReference type="InterPro" id="IPR036522">
    <property type="entry name" value="MoaC_sf"/>
</dbReference>
<dbReference type="InterPro" id="IPR050105">
    <property type="entry name" value="MoCo_biosynth_MoaA/MoaC"/>
</dbReference>
<dbReference type="InterPro" id="IPR002820">
    <property type="entry name" value="Mopterin_CF_biosynth-C_dom"/>
</dbReference>
<dbReference type="NCBIfam" id="TIGR00581">
    <property type="entry name" value="moaC"/>
    <property type="match status" value="1"/>
</dbReference>
<dbReference type="NCBIfam" id="NF006870">
    <property type="entry name" value="PRK09364.1"/>
    <property type="match status" value="1"/>
</dbReference>
<dbReference type="PANTHER" id="PTHR22960:SF29">
    <property type="entry name" value="CYCLIC PYRANOPTERIN MONOPHOSPHATE SYNTHASE"/>
    <property type="match status" value="1"/>
</dbReference>
<dbReference type="PANTHER" id="PTHR22960">
    <property type="entry name" value="MOLYBDOPTERIN COFACTOR SYNTHESIS PROTEIN A"/>
    <property type="match status" value="1"/>
</dbReference>
<dbReference type="Pfam" id="PF01967">
    <property type="entry name" value="MoaC"/>
    <property type="match status" value="1"/>
</dbReference>
<dbReference type="SUPFAM" id="SSF55040">
    <property type="entry name" value="Molybdenum cofactor biosynthesis protein C, MoaC"/>
    <property type="match status" value="1"/>
</dbReference>
<accession>P9WJR8</accession>
<accession>L0TBK8</accession>
<accession>O05788</accession>
<accession>P0A5K4</accession>
<sequence length="170" mass="17845">MIDHALALTHIDERGAARMVDVSEKPVTLRVAKASGLVIMKPSTLRMISDGAAAKGDVMAAARIAGIAAAKRTGDLIPLCHPLGLDAVSVTITPCEPDRVKILATTTTLGRTGVEMEALTAVSVAALTIYDMCKAVDRAMEISQIVLQEKSGGRSGVYRRSASDLACQSR</sequence>
<evidence type="ECO:0000255" key="1">
    <source>
        <dbReference type="HAMAP-Rule" id="MF_01224"/>
    </source>
</evidence>
<keyword id="KW-0456">Lyase</keyword>
<keyword id="KW-0501">Molybdenum cofactor biosynthesis</keyword>
<keyword id="KW-1185">Reference proteome</keyword>
<gene>
    <name type="primary">moaC1</name>
    <name type="synonym">moaC</name>
    <name type="ordered locus">MT3194</name>
</gene>
<organism>
    <name type="scientific">Mycobacterium tuberculosis (strain CDC 1551 / Oshkosh)</name>
    <dbReference type="NCBI Taxonomy" id="83331"/>
    <lineage>
        <taxon>Bacteria</taxon>
        <taxon>Bacillati</taxon>
        <taxon>Actinomycetota</taxon>
        <taxon>Actinomycetes</taxon>
        <taxon>Mycobacteriales</taxon>
        <taxon>Mycobacteriaceae</taxon>
        <taxon>Mycobacterium</taxon>
        <taxon>Mycobacterium tuberculosis complex</taxon>
    </lineage>
</organism>